<proteinExistence type="inferred from homology"/>
<sequence>MIFAKGHGTQNDFVLLPDVDAELVLTAARVAALCDRRKGLGADGVLRVTTAGAAQAVGVLDSLPEGVRVTDWYMDYRNADGSAAQMCGNGVRVFAHYLRASGLEVRDEFVVGSLAGPRPVTCHHVEAAYADVSVDMGKANRLGAGEAVVGGRRFHGLAVDVGNPHLACVDSQLTVDGLAALDVGAPVSFDGAQFPDGVNVEVLTAPVDGAVWMRVHERGVGETRSCGTGTVAAAVAALAAVGSPTGTLTVHVPGGEVVVTVTDATSFLRGPSVLVARGDLADDWWNAMG</sequence>
<feature type="chain" id="PRO_1000011912" description="Diaminopimelate epimerase">
    <location>
        <begin position="1"/>
        <end position="289"/>
    </location>
</feature>
<feature type="active site" description="Proton donor" evidence="1">
    <location>
        <position position="87"/>
    </location>
</feature>
<feature type="active site" description="Proton acceptor" evidence="1">
    <location>
        <position position="226"/>
    </location>
</feature>
<feature type="binding site" evidence="1">
    <location>
        <position position="11"/>
    </location>
    <ligand>
        <name>substrate</name>
    </ligand>
</feature>
<feature type="binding site" evidence="1">
    <location>
        <position position="78"/>
    </location>
    <ligand>
        <name>substrate</name>
    </ligand>
</feature>
<feature type="binding site" evidence="1">
    <location>
        <begin position="88"/>
        <end position="89"/>
    </location>
    <ligand>
        <name>substrate</name>
    </ligand>
</feature>
<feature type="binding site" evidence="1">
    <location>
        <position position="163"/>
    </location>
    <ligand>
        <name>substrate</name>
    </ligand>
</feature>
<feature type="binding site" evidence="1">
    <location>
        <position position="199"/>
    </location>
    <ligand>
        <name>substrate</name>
    </ligand>
</feature>
<feature type="binding site" evidence="1">
    <location>
        <begin position="217"/>
        <end position="218"/>
    </location>
    <ligand>
        <name>substrate</name>
    </ligand>
</feature>
<feature type="binding site" evidence="1">
    <location>
        <begin position="227"/>
        <end position="228"/>
    </location>
    <ligand>
        <name>substrate</name>
    </ligand>
</feature>
<feature type="site" description="Could be important to modulate the pK values of the two catalytic cysteine residues" evidence="1">
    <location>
        <position position="165"/>
    </location>
</feature>
<feature type="site" description="Could be important to modulate the pK values of the two catalytic cysteine residues" evidence="1">
    <location>
        <position position="217"/>
    </location>
</feature>
<comment type="function">
    <text evidence="1">Catalyzes the stereoinversion of LL-2,6-diaminopimelate (L,L-DAP) to meso-diaminopimelate (meso-DAP), a precursor of L-lysine and an essential component of the bacterial peptidoglycan.</text>
</comment>
<comment type="catalytic activity">
    <reaction evidence="1">
        <text>(2S,6S)-2,6-diaminopimelate = meso-2,6-diaminopimelate</text>
        <dbReference type="Rhea" id="RHEA:15393"/>
        <dbReference type="ChEBI" id="CHEBI:57609"/>
        <dbReference type="ChEBI" id="CHEBI:57791"/>
        <dbReference type="EC" id="5.1.1.7"/>
    </reaction>
</comment>
<comment type="pathway">
    <text evidence="1">Amino-acid biosynthesis; L-lysine biosynthesis via DAP pathway; DL-2,6-diaminopimelate from LL-2,6-diaminopimelate: step 1/1.</text>
</comment>
<comment type="subunit">
    <text evidence="1">Homodimer.</text>
</comment>
<comment type="subcellular location">
    <subcellularLocation>
        <location evidence="1">Cytoplasm</location>
    </subcellularLocation>
</comment>
<comment type="similarity">
    <text evidence="1">Belongs to the diaminopimelate epimerase family.</text>
</comment>
<dbReference type="EC" id="5.1.1.7" evidence="1"/>
<dbReference type="EMBL" id="CP000611">
    <property type="protein sequence ID" value="ABQ74528.1"/>
    <property type="molecule type" value="Genomic_DNA"/>
</dbReference>
<dbReference type="RefSeq" id="WP_003413987.1">
    <property type="nucleotide sequence ID" value="NZ_CP016972.1"/>
</dbReference>
<dbReference type="SMR" id="A5U678"/>
<dbReference type="GeneID" id="45426713"/>
<dbReference type="KEGG" id="mra:MRA_2753"/>
<dbReference type="eggNOG" id="COG0253">
    <property type="taxonomic scope" value="Bacteria"/>
</dbReference>
<dbReference type="HOGENOM" id="CLU_053306_4_0_11"/>
<dbReference type="UniPathway" id="UPA00034">
    <property type="reaction ID" value="UER00025"/>
</dbReference>
<dbReference type="Proteomes" id="UP000001988">
    <property type="component" value="Chromosome"/>
</dbReference>
<dbReference type="GO" id="GO:0005829">
    <property type="term" value="C:cytosol"/>
    <property type="evidence" value="ECO:0007669"/>
    <property type="project" value="TreeGrafter"/>
</dbReference>
<dbReference type="GO" id="GO:0008837">
    <property type="term" value="F:diaminopimelate epimerase activity"/>
    <property type="evidence" value="ECO:0007669"/>
    <property type="project" value="UniProtKB-UniRule"/>
</dbReference>
<dbReference type="GO" id="GO:0009089">
    <property type="term" value="P:lysine biosynthetic process via diaminopimelate"/>
    <property type="evidence" value="ECO:0007669"/>
    <property type="project" value="UniProtKB-UniRule"/>
</dbReference>
<dbReference type="Gene3D" id="3.10.310.10">
    <property type="entry name" value="Diaminopimelate Epimerase, Chain A, domain 1"/>
    <property type="match status" value="2"/>
</dbReference>
<dbReference type="HAMAP" id="MF_00197">
    <property type="entry name" value="DAP_epimerase"/>
    <property type="match status" value="1"/>
</dbReference>
<dbReference type="InterPro" id="IPR018510">
    <property type="entry name" value="DAP_epimerase_AS"/>
</dbReference>
<dbReference type="InterPro" id="IPR001653">
    <property type="entry name" value="DAP_epimerase_DapF"/>
</dbReference>
<dbReference type="NCBIfam" id="TIGR00652">
    <property type="entry name" value="DapF"/>
    <property type="match status" value="1"/>
</dbReference>
<dbReference type="PANTHER" id="PTHR31689:SF0">
    <property type="entry name" value="DIAMINOPIMELATE EPIMERASE"/>
    <property type="match status" value="1"/>
</dbReference>
<dbReference type="PANTHER" id="PTHR31689">
    <property type="entry name" value="DIAMINOPIMELATE EPIMERASE, CHLOROPLASTIC"/>
    <property type="match status" value="1"/>
</dbReference>
<dbReference type="Pfam" id="PF01678">
    <property type="entry name" value="DAP_epimerase"/>
    <property type="match status" value="2"/>
</dbReference>
<dbReference type="SUPFAM" id="SSF54506">
    <property type="entry name" value="Diaminopimelate epimerase-like"/>
    <property type="match status" value="2"/>
</dbReference>
<dbReference type="PROSITE" id="PS01326">
    <property type="entry name" value="DAP_EPIMERASE"/>
    <property type="match status" value="1"/>
</dbReference>
<keyword id="KW-0028">Amino-acid biosynthesis</keyword>
<keyword id="KW-0963">Cytoplasm</keyword>
<keyword id="KW-0413">Isomerase</keyword>
<keyword id="KW-0457">Lysine biosynthesis</keyword>
<keyword id="KW-1185">Reference proteome</keyword>
<reference key="1">
    <citation type="journal article" date="2008" name="PLoS ONE">
        <title>Genetic basis of virulence attenuation revealed by comparative genomic analysis of Mycobacterium tuberculosis strain H37Ra versus H37Rv.</title>
        <authorList>
            <person name="Zheng H."/>
            <person name="Lu L."/>
            <person name="Wang B."/>
            <person name="Pu S."/>
            <person name="Zhang X."/>
            <person name="Zhu G."/>
            <person name="Shi W."/>
            <person name="Zhang L."/>
            <person name="Wang H."/>
            <person name="Wang S."/>
            <person name="Zhao G."/>
            <person name="Zhang Y."/>
        </authorList>
    </citation>
    <scope>NUCLEOTIDE SEQUENCE [LARGE SCALE GENOMIC DNA]</scope>
    <source>
        <strain>ATCC 25177 / H37Ra</strain>
    </source>
</reference>
<name>DAPF_MYCTA</name>
<protein>
    <recommendedName>
        <fullName evidence="1">Diaminopimelate epimerase</fullName>
        <shortName evidence="1">DAP epimerase</shortName>
        <ecNumber evidence="1">5.1.1.7</ecNumber>
    </recommendedName>
    <alternativeName>
        <fullName evidence="1">PLP-independent amino acid racemase</fullName>
    </alternativeName>
</protein>
<evidence type="ECO:0000255" key="1">
    <source>
        <dbReference type="HAMAP-Rule" id="MF_00197"/>
    </source>
</evidence>
<gene>
    <name evidence="1" type="primary">dapF</name>
    <name type="ordered locus">MRA_2753</name>
</gene>
<organism>
    <name type="scientific">Mycobacterium tuberculosis (strain ATCC 25177 / H37Ra)</name>
    <dbReference type="NCBI Taxonomy" id="419947"/>
    <lineage>
        <taxon>Bacteria</taxon>
        <taxon>Bacillati</taxon>
        <taxon>Actinomycetota</taxon>
        <taxon>Actinomycetes</taxon>
        <taxon>Mycobacteriales</taxon>
        <taxon>Mycobacteriaceae</taxon>
        <taxon>Mycobacterium</taxon>
        <taxon>Mycobacterium tuberculosis complex</taxon>
    </lineage>
</organism>
<accession>A5U678</accession>